<feature type="chain" id="PRO_0000368708" description="ATP synthase subunit b 1">
    <location>
        <begin position="1"/>
        <end position="163"/>
    </location>
</feature>
<feature type="transmembrane region" description="Helical" evidence="1">
    <location>
        <begin position="5"/>
        <end position="25"/>
    </location>
</feature>
<evidence type="ECO:0000255" key="1">
    <source>
        <dbReference type="HAMAP-Rule" id="MF_01398"/>
    </source>
</evidence>
<accession>B3PRF9</accession>
<comment type="function">
    <text evidence="1">F(1)F(0) ATP synthase produces ATP from ADP in the presence of a proton or sodium gradient. F-type ATPases consist of two structural domains, F(1) containing the extramembraneous catalytic core and F(0) containing the membrane proton channel, linked together by a central stalk and a peripheral stalk. During catalysis, ATP synthesis in the catalytic domain of F(1) is coupled via a rotary mechanism of the central stalk subunits to proton translocation.</text>
</comment>
<comment type="function">
    <text evidence="1">Component of the F(0) channel, it forms part of the peripheral stalk, linking F(1) to F(0).</text>
</comment>
<comment type="subunit">
    <text evidence="1">F-type ATPases have 2 components, F(1) - the catalytic core - and F(0) - the membrane proton channel. F(1) has five subunits: alpha(3), beta(3), gamma(1), delta(1), epsilon(1). F(0) has three main subunits: a(1), b(2) and c(10-14). The alpha and beta chains form an alternating ring which encloses part of the gamma chain. F(1) is attached to F(0) by a central stalk formed by the gamma and epsilon chains, while a peripheral stalk is formed by the delta and b chains.</text>
</comment>
<comment type="subcellular location">
    <subcellularLocation>
        <location evidence="1">Cell inner membrane</location>
        <topology evidence="1">Single-pass membrane protein</topology>
    </subcellularLocation>
</comment>
<comment type="similarity">
    <text evidence="1">Belongs to the ATPase B chain family.</text>
</comment>
<dbReference type="EMBL" id="CP001074">
    <property type="protein sequence ID" value="ACE89942.1"/>
    <property type="molecule type" value="Genomic_DNA"/>
</dbReference>
<dbReference type="SMR" id="B3PRF9"/>
<dbReference type="KEGG" id="rec:RHECIAT_CH0000957"/>
<dbReference type="eggNOG" id="COG0711">
    <property type="taxonomic scope" value="Bacteria"/>
</dbReference>
<dbReference type="HOGENOM" id="CLU_079215_6_1_5"/>
<dbReference type="Proteomes" id="UP000008817">
    <property type="component" value="Chromosome"/>
</dbReference>
<dbReference type="GO" id="GO:0005886">
    <property type="term" value="C:plasma membrane"/>
    <property type="evidence" value="ECO:0007669"/>
    <property type="project" value="UniProtKB-SubCell"/>
</dbReference>
<dbReference type="GO" id="GO:0045259">
    <property type="term" value="C:proton-transporting ATP synthase complex"/>
    <property type="evidence" value="ECO:0007669"/>
    <property type="project" value="UniProtKB-KW"/>
</dbReference>
<dbReference type="GO" id="GO:0046933">
    <property type="term" value="F:proton-transporting ATP synthase activity, rotational mechanism"/>
    <property type="evidence" value="ECO:0007669"/>
    <property type="project" value="UniProtKB-UniRule"/>
</dbReference>
<dbReference type="GO" id="GO:0046961">
    <property type="term" value="F:proton-transporting ATPase activity, rotational mechanism"/>
    <property type="evidence" value="ECO:0007669"/>
    <property type="project" value="TreeGrafter"/>
</dbReference>
<dbReference type="CDD" id="cd06503">
    <property type="entry name" value="ATP-synt_Fo_b"/>
    <property type="match status" value="1"/>
</dbReference>
<dbReference type="HAMAP" id="MF_01398">
    <property type="entry name" value="ATP_synth_b_bprime"/>
    <property type="match status" value="1"/>
</dbReference>
<dbReference type="InterPro" id="IPR002146">
    <property type="entry name" value="ATP_synth_b/b'su_bac/chlpt"/>
</dbReference>
<dbReference type="InterPro" id="IPR050059">
    <property type="entry name" value="ATP_synthase_B_chain"/>
</dbReference>
<dbReference type="NCBIfam" id="NF006611">
    <property type="entry name" value="PRK09173.1"/>
    <property type="match status" value="1"/>
</dbReference>
<dbReference type="PANTHER" id="PTHR33445:SF1">
    <property type="entry name" value="ATP SYNTHASE SUBUNIT B"/>
    <property type="match status" value="1"/>
</dbReference>
<dbReference type="PANTHER" id="PTHR33445">
    <property type="entry name" value="ATP SYNTHASE SUBUNIT B', CHLOROPLASTIC"/>
    <property type="match status" value="1"/>
</dbReference>
<dbReference type="Pfam" id="PF00430">
    <property type="entry name" value="ATP-synt_B"/>
    <property type="match status" value="1"/>
</dbReference>
<proteinExistence type="inferred from homology"/>
<sequence length="163" mass="18015">MEFHLDATFFAFVGLVLFLALVVYLKVPGMMARSLDDRADQIRNELAEAKRLREEAQHLLAEYQRKRKEAEAEAAHIVAAAEREAEMLTADAKKKTEEFVANRTALSEQKILQAEAEAMKAVRSAAVDLAIAAAETVLAKQADAKVQSELFGNAVSQVKTRLN</sequence>
<keyword id="KW-0066">ATP synthesis</keyword>
<keyword id="KW-0997">Cell inner membrane</keyword>
<keyword id="KW-1003">Cell membrane</keyword>
<keyword id="KW-0138">CF(0)</keyword>
<keyword id="KW-0375">Hydrogen ion transport</keyword>
<keyword id="KW-0406">Ion transport</keyword>
<keyword id="KW-0472">Membrane</keyword>
<keyword id="KW-0812">Transmembrane</keyword>
<keyword id="KW-1133">Transmembrane helix</keyword>
<keyword id="KW-0813">Transport</keyword>
<organism>
    <name type="scientific">Rhizobium etli (strain CIAT 652)</name>
    <dbReference type="NCBI Taxonomy" id="491916"/>
    <lineage>
        <taxon>Bacteria</taxon>
        <taxon>Pseudomonadati</taxon>
        <taxon>Pseudomonadota</taxon>
        <taxon>Alphaproteobacteria</taxon>
        <taxon>Hyphomicrobiales</taxon>
        <taxon>Rhizobiaceae</taxon>
        <taxon>Rhizobium/Agrobacterium group</taxon>
        <taxon>Rhizobium</taxon>
    </lineage>
</organism>
<protein>
    <recommendedName>
        <fullName evidence="1">ATP synthase subunit b 1</fullName>
    </recommendedName>
    <alternativeName>
        <fullName evidence="1">ATP synthase F(0) sector subunit b 1</fullName>
    </alternativeName>
    <alternativeName>
        <fullName evidence="1">ATPase subunit I 1</fullName>
    </alternativeName>
    <alternativeName>
        <fullName evidence="1">F-type ATPase subunit b 1</fullName>
        <shortName evidence="1">F-ATPase subunit b 1</shortName>
    </alternativeName>
</protein>
<reference key="1">
    <citation type="journal article" date="2010" name="Appl. Environ. Microbiol.">
        <title>Conserved symbiotic plasmid DNA sequences in the multireplicon pangenomic structure of Rhizobium etli.</title>
        <authorList>
            <person name="Gonzalez V."/>
            <person name="Acosta J.L."/>
            <person name="Santamaria R.I."/>
            <person name="Bustos P."/>
            <person name="Fernandez J.L."/>
            <person name="Hernandez Gonzalez I.L."/>
            <person name="Diaz R."/>
            <person name="Flores M."/>
            <person name="Palacios R."/>
            <person name="Mora J."/>
            <person name="Davila G."/>
        </authorList>
    </citation>
    <scope>NUCLEOTIDE SEQUENCE [LARGE SCALE GENOMIC DNA]</scope>
    <source>
        <strain>CIAT 652</strain>
    </source>
</reference>
<name>ATPF1_RHIE6</name>
<gene>
    <name evidence="1" type="primary">atpF1</name>
    <name type="ordered locus">RHECIAT_CH0000957</name>
</gene>